<organism>
    <name type="scientific">Polaromonas naphthalenivorans (strain CJ2)</name>
    <dbReference type="NCBI Taxonomy" id="365044"/>
    <lineage>
        <taxon>Bacteria</taxon>
        <taxon>Pseudomonadati</taxon>
        <taxon>Pseudomonadota</taxon>
        <taxon>Betaproteobacteria</taxon>
        <taxon>Burkholderiales</taxon>
        <taxon>Comamonadaceae</taxon>
        <taxon>Polaromonas</taxon>
    </lineage>
</organism>
<comment type="function">
    <text evidence="1">This protein is involved in the repair of mismatches in DNA. It is possible that it carries out the mismatch recognition step. This protein has a weak ATPase activity.</text>
</comment>
<comment type="similarity">
    <text evidence="1">Belongs to the DNA mismatch repair MutS family.</text>
</comment>
<evidence type="ECO:0000255" key="1">
    <source>
        <dbReference type="HAMAP-Rule" id="MF_00096"/>
    </source>
</evidence>
<protein>
    <recommendedName>
        <fullName evidence="1">DNA mismatch repair protein MutS</fullName>
    </recommendedName>
</protein>
<name>MUTS_POLNA</name>
<feature type="chain" id="PRO_0000335195" description="DNA mismatch repair protein MutS">
    <location>
        <begin position="1"/>
        <end position="870"/>
    </location>
</feature>
<feature type="binding site" evidence="1">
    <location>
        <begin position="629"/>
        <end position="636"/>
    </location>
    <ligand>
        <name>ATP</name>
        <dbReference type="ChEBI" id="CHEBI:30616"/>
    </ligand>
</feature>
<accession>A1VLZ6</accession>
<keyword id="KW-0067">ATP-binding</keyword>
<keyword id="KW-0227">DNA damage</keyword>
<keyword id="KW-0234">DNA repair</keyword>
<keyword id="KW-0238">DNA-binding</keyword>
<keyword id="KW-0547">Nucleotide-binding</keyword>
<keyword id="KW-1185">Reference proteome</keyword>
<dbReference type="EMBL" id="CP000529">
    <property type="protein sequence ID" value="ABM36674.1"/>
    <property type="molecule type" value="Genomic_DNA"/>
</dbReference>
<dbReference type="RefSeq" id="WP_011800765.1">
    <property type="nucleotide sequence ID" value="NC_008781.1"/>
</dbReference>
<dbReference type="SMR" id="A1VLZ6"/>
<dbReference type="STRING" id="365044.Pnap_1359"/>
<dbReference type="KEGG" id="pna:Pnap_1359"/>
<dbReference type="eggNOG" id="COG0249">
    <property type="taxonomic scope" value="Bacteria"/>
</dbReference>
<dbReference type="HOGENOM" id="CLU_002472_4_0_4"/>
<dbReference type="OrthoDB" id="9802448at2"/>
<dbReference type="Proteomes" id="UP000000644">
    <property type="component" value="Chromosome"/>
</dbReference>
<dbReference type="GO" id="GO:0005829">
    <property type="term" value="C:cytosol"/>
    <property type="evidence" value="ECO:0007669"/>
    <property type="project" value="TreeGrafter"/>
</dbReference>
<dbReference type="GO" id="GO:0005524">
    <property type="term" value="F:ATP binding"/>
    <property type="evidence" value="ECO:0007669"/>
    <property type="project" value="UniProtKB-UniRule"/>
</dbReference>
<dbReference type="GO" id="GO:0140664">
    <property type="term" value="F:ATP-dependent DNA damage sensor activity"/>
    <property type="evidence" value="ECO:0007669"/>
    <property type="project" value="InterPro"/>
</dbReference>
<dbReference type="GO" id="GO:0003684">
    <property type="term" value="F:damaged DNA binding"/>
    <property type="evidence" value="ECO:0007669"/>
    <property type="project" value="UniProtKB-UniRule"/>
</dbReference>
<dbReference type="GO" id="GO:0030983">
    <property type="term" value="F:mismatched DNA binding"/>
    <property type="evidence" value="ECO:0007669"/>
    <property type="project" value="InterPro"/>
</dbReference>
<dbReference type="GO" id="GO:0006298">
    <property type="term" value="P:mismatch repair"/>
    <property type="evidence" value="ECO:0007669"/>
    <property type="project" value="UniProtKB-UniRule"/>
</dbReference>
<dbReference type="FunFam" id="3.40.1170.10:FF:000001">
    <property type="entry name" value="DNA mismatch repair protein MutS"/>
    <property type="match status" value="1"/>
</dbReference>
<dbReference type="Gene3D" id="1.10.1420.10">
    <property type="match status" value="2"/>
</dbReference>
<dbReference type="Gene3D" id="6.10.140.430">
    <property type="match status" value="1"/>
</dbReference>
<dbReference type="Gene3D" id="3.40.1170.10">
    <property type="entry name" value="DNA repair protein MutS, domain I"/>
    <property type="match status" value="1"/>
</dbReference>
<dbReference type="Gene3D" id="3.30.420.110">
    <property type="entry name" value="MutS, connector domain"/>
    <property type="match status" value="1"/>
</dbReference>
<dbReference type="Gene3D" id="3.40.50.300">
    <property type="entry name" value="P-loop containing nucleotide triphosphate hydrolases"/>
    <property type="match status" value="1"/>
</dbReference>
<dbReference type="HAMAP" id="MF_00096">
    <property type="entry name" value="MutS"/>
    <property type="match status" value="1"/>
</dbReference>
<dbReference type="InterPro" id="IPR005748">
    <property type="entry name" value="DNA_mismatch_repair_MutS"/>
</dbReference>
<dbReference type="InterPro" id="IPR007695">
    <property type="entry name" value="DNA_mismatch_repair_MutS-lik_N"/>
</dbReference>
<dbReference type="InterPro" id="IPR017261">
    <property type="entry name" value="DNA_mismatch_repair_MutS/MSH"/>
</dbReference>
<dbReference type="InterPro" id="IPR000432">
    <property type="entry name" value="DNA_mismatch_repair_MutS_C"/>
</dbReference>
<dbReference type="InterPro" id="IPR007861">
    <property type="entry name" value="DNA_mismatch_repair_MutS_clamp"/>
</dbReference>
<dbReference type="InterPro" id="IPR007696">
    <property type="entry name" value="DNA_mismatch_repair_MutS_core"/>
</dbReference>
<dbReference type="InterPro" id="IPR016151">
    <property type="entry name" value="DNA_mismatch_repair_MutS_N"/>
</dbReference>
<dbReference type="InterPro" id="IPR036187">
    <property type="entry name" value="DNA_mismatch_repair_MutS_sf"/>
</dbReference>
<dbReference type="InterPro" id="IPR007860">
    <property type="entry name" value="DNA_mmatch_repair_MutS_con_dom"/>
</dbReference>
<dbReference type="InterPro" id="IPR045076">
    <property type="entry name" value="MutS"/>
</dbReference>
<dbReference type="InterPro" id="IPR036678">
    <property type="entry name" value="MutS_con_dom_sf"/>
</dbReference>
<dbReference type="InterPro" id="IPR027417">
    <property type="entry name" value="P-loop_NTPase"/>
</dbReference>
<dbReference type="NCBIfam" id="TIGR01070">
    <property type="entry name" value="mutS1"/>
    <property type="match status" value="1"/>
</dbReference>
<dbReference type="NCBIfam" id="NF003810">
    <property type="entry name" value="PRK05399.1"/>
    <property type="match status" value="1"/>
</dbReference>
<dbReference type="PANTHER" id="PTHR11361:SF34">
    <property type="entry name" value="DNA MISMATCH REPAIR PROTEIN MSH1, MITOCHONDRIAL"/>
    <property type="match status" value="1"/>
</dbReference>
<dbReference type="PANTHER" id="PTHR11361">
    <property type="entry name" value="DNA MISMATCH REPAIR PROTEIN MUTS FAMILY MEMBER"/>
    <property type="match status" value="1"/>
</dbReference>
<dbReference type="Pfam" id="PF01624">
    <property type="entry name" value="MutS_I"/>
    <property type="match status" value="1"/>
</dbReference>
<dbReference type="Pfam" id="PF05188">
    <property type="entry name" value="MutS_II"/>
    <property type="match status" value="1"/>
</dbReference>
<dbReference type="Pfam" id="PF05192">
    <property type="entry name" value="MutS_III"/>
    <property type="match status" value="1"/>
</dbReference>
<dbReference type="Pfam" id="PF05190">
    <property type="entry name" value="MutS_IV"/>
    <property type="match status" value="1"/>
</dbReference>
<dbReference type="Pfam" id="PF00488">
    <property type="entry name" value="MutS_V"/>
    <property type="match status" value="1"/>
</dbReference>
<dbReference type="PIRSF" id="PIRSF037677">
    <property type="entry name" value="DNA_mis_repair_Msh6"/>
    <property type="match status" value="1"/>
</dbReference>
<dbReference type="SMART" id="SM00534">
    <property type="entry name" value="MUTSac"/>
    <property type="match status" value="1"/>
</dbReference>
<dbReference type="SMART" id="SM00533">
    <property type="entry name" value="MUTSd"/>
    <property type="match status" value="1"/>
</dbReference>
<dbReference type="SUPFAM" id="SSF55271">
    <property type="entry name" value="DNA repair protein MutS, domain I"/>
    <property type="match status" value="1"/>
</dbReference>
<dbReference type="SUPFAM" id="SSF53150">
    <property type="entry name" value="DNA repair protein MutS, domain II"/>
    <property type="match status" value="1"/>
</dbReference>
<dbReference type="SUPFAM" id="SSF48334">
    <property type="entry name" value="DNA repair protein MutS, domain III"/>
    <property type="match status" value="1"/>
</dbReference>
<dbReference type="SUPFAM" id="SSF52540">
    <property type="entry name" value="P-loop containing nucleoside triphosphate hydrolases"/>
    <property type="match status" value="1"/>
</dbReference>
<dbReference type="PROSITE" id="PS00486">
    <property type="entry name" value="DNA_MISMATCH_REPAIR_2"/>
    <property type="match status" value="1"/>
</dbReference>
<gene>
    <name evidence="1" type="primary">mutS</name>
    <name type="ordered locus">Pnap_1359</name>
</gene>
<sequence length="870" mass="94050">MQKDTLKPGEAPVRAAPHTPMMTQYHAIKAEYPDTLVFYRMGDFYEVFYADAEKASSLLDITLTKRGQSAGEPVVMAGIPFHALEGYLAKLIKLGESVAICEQVGDVATAKGPVERKVVRVVTPGTLTDTELLSDKTESILLAVHQGARNTCGLAWLSVTQGEIHLAHCANGELETWLARIAPSELLYNVDATPAFEQRLQTQRCAASARPAWQFDAALGVRRLLDQLKVASLASWHAEGLNEAHAAASALLGYAEHTQGRALPHVQGLQVVRSGELIELPPATRRNLELTQTLRGEDSPTLFSLLDTCTTGMGSRALKSWLLSPRRDRAQAASRLEAITQLRSGAQQTLRTQLKGCSDVERITARIALRQVRPRELVALQLTLQKAELLTPVDSAQIPLLTTIFEDLQPPLGCAELLGQCILDEPAALIRDGGVINHGLDAELDELRAIQTNCDGFLLDLEIREKARTGIANLRVQFNKVHGFYIEVTQGQLDKVPADYRRRQTLKNAERYITPELKTFEDKALSAQERALAREKWLYEQLLDQLQEFVPALSRLARAIAALDALCALAERSLTLNWCAPVFVKEPCIAIGQGRHPVVEARLAETGGGAFIANDCSLTGKSRMQMITGPNMGGKSTYMRQVALIVLLASVGSYVPASACRLGPIDAIHTRIGAADDVANAQSTFMLEMLEAAQILHAATPYSLVLMDEIGRGTSTFDGLALAGGIAAYLHNKAQAFTLFATHYFELTEFAAQHHGAMNVHVSAVESGSDIVFLHHIEPGPASKSYGIAVAKLAGVPAAVVNHARHALAALEAQQSQASAQVDLFAAPPEAPASGQTAIDKALASIDPDILSPREALEALYQLKKLASAA</sequence>
<proteinExistence type="inferred from homology"/>
<reference key="1">
    <citation type="journal article" date="2009" name="Environ. Microbiol.">
        <title>The genome of Polaromonas naphthalenivorans strain CJ2, isolated from coal tar-contaminated sediment, reveals physiological and metabolic versatility and evolution through extensive horizontal gene transfer.</title>
        <authorList>
            <person name="Yagi J.M."/>
            <person name="Sims D."/>
            <person name="Brettin T."/>
            <person name="Bruce D."/>
            <person name="Madsen E.L."/>
        </authorList>
    </citation>
    <scope>NUCLEOTIDE SEQUENCE [LARGE SCALE GENOMIC DNA]</scope>
    <source>
        <strain>CJ2</strain>
    </source>
</reference>